<gene>
    <name evidence="18" type="primary">Cemip2</name>
    <name evidence="16" type="synonym">Kiaa1412</name>
    <name evidence="15" type="synonym">Tmem2</name>
</gene>
<keyword id="KW-0037">Angiogenesis</keyword>
<keyword id="KW-1003">Cell membrane</keyword>
<keyword id="KW-0217">Developmental protein</keyword>
<keyword id="KW-0325">Glycoprotein</keyword>
<keyword id="KW-0326">Glycosidase</keyword>
<keyword id="KW-0378">Hydrolase</keyword>
<keyword id="KW-0430">Lectin</keyword>
<keyword id="KW-0472">Membrane</keyword>
<keyword id="KW-0597">Phosphoprotein</keyword>
<keyword id="KW-1185">Reference proteome</keyword>
<keyword id="KW-0677">Repeat</keyword>
<keyword id="KW-0735">Signal-anchor</keyword>
<keyword id="KW-0812">Transmembrane</keyword>
<keyword id="KW-1133">Transmembrane helix</keyword>
<comment type="function">
    <text evidence="1 10 11 12 13 14">Cell surface hyaluronidase that mediates the initial cleavage of extracellular high-molecular-weight hyaluronan into intermediate-size hyaluronan of approximately 5 kDa fragments (PubMed:28246172, PubMed:37196767, PubMed:37527776). Very specific to hyaluronan; not able to cleave chondroitin sulfate or dermatan sulfate (PubMed:28246172). Has an essential function in systemic hyaluronan catabolism and turnover and regulates cell adhesion and migration via hyaluronan degradation at focal adhesion sites (PubMed:33647313, PubMed:34624311). Acts as a regulator of angiogenesis and heart morphogenesis by mediating degradation of extracellular hyaluronan, thereby regulating VEGF signaling (By similarity).</text>
</comment>
<comment type="catalytic activity">
    <reaction evidence="10 11 13 14">
        <text>Random hydrolysis of (1-&gt;4)-linkages between N-acetyl-beta-D-glucosamine and D-glucuronate residues in hyaluronate.</text>
        <dbReference type="EC" id="3.2.1.35"/>
    </reaction>
</comment>
<comment type="cofactor">
    <cofactor evidence="10">
        <name>Ca(2+)</name>
        <dbReference type="ChEBI" id="CHEBI:29108"/>
    </cofactor>
</comment>
<comment type="biophysicochemical properties">
    <phDependence>
        <text evidence="10">Optimum pH is 6-7.</text>
    </phDependence>
</comment>
<comment type="subcellular location">
    <subcellularLocation>
        <location evidence="10">Cell membrane</location>
        <topology evidence="10">Single-pass type II membrane protein</topology>
    </subcellularLocation>
</comment>
<comment type="tissue specificity">
    <text evidence="6 10 12">Widely expressed (PubMed:10767548, PubMed:28246172). Strongly expressed in endothelial cells in the subcapsular sinus of lymph nodes and in the liver sinusoid, two primary sites implicated in systemic hyaluronan turnover (PubMed:34624311).</text>
</comment>
<comment type="developmental stage">
    <text evidence="9">Expressed ubiquitously at early stages of development. Expressed in the endocardial cells lining the ventricles and atria at 9.5 dpc.</text>
</comment>
<comment type="similarity">
    <text evidence="17">Belongs to the CEMIP family.</text>
</comment>
<comment type="sequence caution" evidence="17">
    <conflict type="erroneous initiation">
        <sequence resource="EMBL-CDS" id="AAH19745"/>
    </conflict>
    <text>Truncated N-terminus.</text>
</comment>
<protein>
    <recommendedName>
        <fullName evidence="15">Cell surface hyaluronidase</fullName>
        <ecNumber evidence="10 11 13 14">3.2.1.35</ecNumber>
    </recommendedName>
    <alternativeName>
        <fullName evidence="2">Cell migration-inducing hyaluronidase 2</fullName>
    </alternativeName>
    <alternativeName>
        <fullName evidence="15">Transmembrane protein 2</fullName>
    </alternativeName>
</protein>
<dbReference type="EC" id="3.2.1.35" evidence="10 11 13 14"/>
<dbReference type="EMBL" id="BC019745">
    <property type="protein sequence ID" value="AAH19745.1"/>
    <property type="status" value="ALT_INIT"/>
    <property type="molecule type" value="mRNA"/>
</dbReference>
<dbReference type="EMBL" id="BC076570">
    <property type="protein sequence ID" value="AAH76570.1"/>
    <property type="molecule type" value="mRNA"/>
</dbReference>
<dbReference type="EMBL" id="BC089353">
    <property type="protein sequence ID" value="AAH89353.1"/>
    <property type="molecule type" value="mRNA"/>
</dbReference>
<dbReference type="EMBL" id="AK149667">
    <property type="protein sequence ID" value="BAE29013.1"/>
    <property type="molecule type" value="mRNA"/>
</dbReference>
<dbReference type="EMBL" id="AK149803">
    <property type="protein sequence ID" value="BAE29096.1"/>
    <property type="molecule type" value="mRNA"/>
</dbReference>
<dbReference type="EMBL" id="AK129352">
    <property type="protein sequence ID" value="BAC98162.1"/>
    <property type="molecule type" value="mRNA"/>
</dbReference>
<dbReference type="EMBL" id="AF137031">
    <property type="protein sequence ID" value="AAF21349.1"/>
    <property type="molecule type" value="mRNA"/>
</dbReference>
<dbReference type="CCDS" id="CCDS37934.1"/>
<dbReference type="RefSeq" id="NP_001028931.1">
    <property type="nucleotide sequence ID" value="NM_001033759.2"/>
</dbReference>
<dbReference type="RefSeq" id="NP_114386.3">
    <property type="nucleotide sequence ID" value="NM_031997.4"/>
</dbReference>
<dbReference type="RefSeq" id="XP_006527549.1">
    <property type="nucleotide sequence ID" value="XM_006527486.3"/>
</dbReference>
<dbReference type="RefSeq" id="XP_006527550.1">
    <property type="nucleotide sequence ID" value="XM_006527487.3"/>
</dbReference>
<dbReference type="SMR" id="Q5FWI3"/>
<dbReference type="BioGRID" id="219982">
    <property type="interactions" value="2"/>
</dbReference>
<dbReference type="FunCoup" id="Q5FWI3">
    <property type="interactions" value="1739"/>
</dbReference>
<dbReference type="STRING" id="10090.ENSMUSP00000093908"/>
<dbReference type="GlyConnect" id="2793">
    <property type="glycosylation" value="4 N-Linked glycans (4 sites)"/>
</dbReference>
<dbReference type="GlyCosmos" id="Q5FWI3">
    <property type="glycosylation" value="5 sites, 4 glycans"/>
</dbReference>
<dbReference type="GlyGen" id="Q5FWI3">
    <property type="glycosylation" value="11 sites, 14 N-linked glycans (11 sites)"/>
</dbReference>
<dbReference type="iPTMnet" id="Q5FWI3"/>
<dbReference type="PhosphoSitePlus" id="Q5FWI3"/>
<dbReference type="SwissPalm" id="Q5FWI3"/>
<dbReference type="jPOST" id="Q5FWI3"/>
<dbReference type="PaxDb" id="10090-ENSMUSP00000093908"/>
<dbReference type="PeptideAtlas" id="Q5FWI3"/>
<dbReference type="ProteomicsDB" id="259253"/>
<dbReference type="Pumba" id="Q5FWI3"/>
<dbReference type="Antibodypedia" id="43356">
    <property type="antibodies" value="74 antibodies from 21 providers"/>
</dbReference>
<dbReference type="DNASU" id="83921"/>
<dbReference type="Ensembl" id="ENSMUST00000025663.8">
    <property type="protein sequence ID" value="ENSMUSP00000025663.7"/>
    <property type="gene ID" value="ENSMUSG00000024754.14"/>
</dbReference>
<dbReference type="Ensembl" id="ENSMUST00000096194.9">
    <property type="protein sequence ID" value="ENSMUSP00000093908.3"/>
    <property type="gene ID" value="ENSMUSG00000024754.14"/>
</dbReference>
<dbReference type="GeneID" id="83921"/>
<dbReference type="KEGG" id="mmu:83921"/>
<dbReference type="UCSC" id="uc008gzg.2">
    <property type="organism name" value="mouse"/>
</dbReference>
<dbReference type="AGR" id="MGI:1890373"/>
<dbReference type="CTD" id="23670"/>
<dbReference type="MGI" id="MGI:1890373">
    <property type="gene designation" value="Cemip2"/>
</dbReference>
<dbReference type="VEuPathDB" id="HostDB:ENSMUSG00000024754"/>
<dbReference type="eggNOG" id="ENOG502QUM7">
    <property type="taxonomic scope" value="Eukaryota"/>
</dbReference>
<dbReference type="GeneTree" id="ENSGT00940000153636"/>
<dbReference type="HOGENOM" id="CLU_005606_0_0_1"/>
<dbReference type="InParanoid" id="Q5FWI3"/>
<dbReference type="OMA" id="DYGCPRA"/>
<dbReference type="OrthoDB" id="120976at2759"/>
<dbReference type="PhylomeDB" id="Q5FWI3"/>
<dbReference type="TreeFam" id="TF316575"/>
<dbReference type="BioGRID-ORCS" id="83921">
    <property type="hits" value="4 hits in 78 CRISPR screens"/>
</dbReference>
<dbReference type="ChiTaRS" id="Tmem2">
    <property type="organism name" value="mouse"/>
</dbReference>
<dbReference type="PRO" id="PR:Q5FWI3"/>
<dbReference type="Proteomes" id="UP000000589">
    <property type="component" value="Chromosome 19"/>
</dbReference>
<dbReference type="RNAct" id="Q5FWI3">
    <property type="molecule type" value="protein"/>
</dbReference>
<dbReference type="Bgee" id="ENSMUSG00000024754">
    <property type="expression patterns" value="Expressed in rostral migratory stream and 249 other cell types or tissues"/>
</dbReference>
<dbReference type="ExpressionAtlas" id="Q5FWI3">
    <property type="expression patterns" value="baseline and differential"/>
</dbReference>
<dbReference type="GO" id="GO:0005829">
    <property type="term" value="C:cytosol"/>
    <property type="evidence" value="ECO:0007669"/>
    <property type="project" value="Ensembl"/>
</dbReference>
<dbReference type="GO" id="GO:0005730">
    <property type="term" value="C:nucleolus"/>
    <property type="evidence" value="ECO:0007669"/>
    <property type="project" value="Ensembl"/>
</dbReference>
<dbReference type="GO" id="GO:0005886">
    <property type="term" value="C:plasma membrane"/>
    <property type="evidence" value="ECO:0000250"/>
    <property type="project" value="UniProtKB"/>
</dbReference>
<dbReference type="GO" id="GO:0005509">
    <property type="term" value="F:calcium ion binding"/>
    <property type="evidence" value="ECO:0000250"/>
    <property type="project" value="UniProtKB"/>
</dbReference>
<dbReference type="GO" id="GO:0030246">
    <property type="term" value="F:carbohydrate binding"/>
    <property type="evidence" value="ECO:0007669"/>
    <property type="project" value="UniProtKB-KW"/>
</dbReference>
<dbReference type="GO" id="GO:0004415">
    <property type="term" value="F:hyalurononglucosaminidase activity"/>
    <property type="evidence" value="ECO:0000314"/>
    <property type="project" value="UniProtKB"/>
</dbReference>
<dbReference type="GO" id="GO:0001525">
    <property type="term" value="P:angiogenesis"/>
    <property type="evidence" value="ECO:0007669"/>
    <property type="project" value="UniProtKB-KW"/>
</dbReference>
<dbReference type="GO" id="GO:0030214">
    <property type="term" value="P:hyaluronan catabolic process"/>
    <property type="evidence" value="ECO:0000315"/>
    <property type="project" value="UniProtKB"/>
</dbReference>
<dbReference type="GO" id="GO:1903670">
    <property type="term" value="P:regulation of sprouting angiogenesis"/>
    <property type="evidence" value="ECO:0000250"/>
    <property type="project" value="UniProtKB"/>
</dbReference>
<dbReference type="CDD" id="cd13938">
    <property type="entry name" value="PANDER_like_TMEM2"/>
    <property type="match status" value="1"/>
</dbReference>
<dbReference type="InterPro" id="IPR052252">
    <property type="entry name" value="CEMIP/CEMIP2"/>
</dbReference>
<dbReference type="InterPro" id="IPR055401">
    <property type="entry name" value="CEMIP_beta-hel_dom"/>
</dbReference>
<dbReference type="InterPro" id="IPR055400">
    <property type="entry name" value="CEMIP_X"/>
</dbReference>
<dbReference type="InterPro" id="IPR019316">
    <property type="entry name" value="G8_domain"/>
</dbReference>
<dbReference type="InterPro" id="IPR039477">
    <property type="entry name" value="ILEI/PANDER_dom"/>
</dbReference>
<dbReference type="InterPro" id="IPR011050">
    <property type="entry name" value="Pectin_lyase_fold/virulence"/>
</dbReference>
<dbReference type="InterPro" id="IPR039473">
    <property type="entry name" value="TMEM2_PANDER-like"/>
</dbReference>
<dbReference type="PANTHER" id="PTHR15535:SF26">
    <property type="entry name" value="CELL SURFACE HYALURONIDASE"/>
    <property type="match status" value="1"/>
</dbReference>
<dbReference type="PANTHER" id="PTHR15535">
    <property type="entry name" value="TRANSMEMBRANE PROTEIN 2-RELATED"/>
    <property type="match status" value="1"/>
</dbReference>
<dbReference type="Pfam" id="PF24606">
    <property type="entry name" value="CEMIP_beta-hel"/>
    <property type="match status" value="1"/>
</dbReference>
<dbReference type="Pfam" id="PF24605">
    <property type="entry name" value="CEMIP_X"/>
    <property type="match status" value="1"/>
</dbReference>
<dbReference type="Pfam" id="PF10162">
    <property type="entry name" value="G8"/>
    <property type="match status" value="1"/>
</dbReference>
<dbReference type="Pfam" id="PF15711">
    <property type="entry name" value="ILEI"/>
    <property type="match status" value="2"/>
</dbReference>
<dbReference type="SMART" id="SM01225">
    <property type="entry name" value="G8"/>
    <property type="match status" value="1"/>
</dbReference>
<dbReference type="SUPFAM" id="SSF51126">
    <property type="entry name" value="Pectin lyase-like"/>
    <property type="match status" value="1"/>
</dbReference>
<dbReference type="PROSITE" id="PS51484">
    <property type="entry name" value="G8"/>
    <property type="match status" value="1"/>
</dbReference>
<dbReference type="PROSITE" id="PS52031">
    <property type="entry name" value="GG_LECTIN"/>
    <property type="match status" value="2"/>
</dbReference>
<sequence>MYAAGSRGHSPAFLQPQNGNGHRSPGYVPGKVVPLRPAPPPKNHASAKLTSRSQDAPATFAFSPEEQRTPSESRKRKRHKNTFICFAITSFSFFVALAVILGISSKYAPDENCPDQNPRLRNWDPGQDSAKHIVIKEGDLFRLTSDATVDSIVIQDGGLLVFGDDKDGSKNITLRTRYILIQDGGALHIGAEKCRYRSKATITLYGKSDERESMPIFGKKFIGVEAGGTLELHGAQRTSWTMLARTLHSSGLPFGSYAFEKDFSRGLNVRVIDQDTARVLENEKFDTHEYHNESRRLQEFLRAQEPGRIVAIAVGDSAVKSLLQGTIQMIQDRLGSKLIQGLGYRQAWALVGVIDGGSSSCNESVRNYENHSTGGKALAQGEFYTLDGQKFSVTAYSEWSQGISLSGFRVDIADGVKLHLLDDVSTWEAGDRIVVASTDYSMYQAEELTLLRCPECSRSQVKVKEIPQYLHVGEIIDGIDMRAEVGLLTRNIVIQGEMEDSCYAENHCQFFDYDTFGGHVMIEKNFTSVHLSYVELKHMGQQHMGRYPVHFHLCGDVDSKGGYSQPASVDGLSVHHSFSRCITVHGTSGLLIKDTIGFDTLGHCFFLEDGVEQRNILYHNLGLLTKPGTLLPTDRNSSMCTVMRDGVFGNYVPVPTTDCMAVSTFWIAHPNNHLINNAAAGSQDAGIWYLFHKEPTGESSGLQLLEKPELTPLGIFYNNRVHSNFKAGLFVDKGVKTTNASASDPREYLCLDNSARFRPHQDADPEKPRVAAIIDRLIAFKNNDNGAWVRGGDIIVQNSAFADNGKGLTFASDGSFPSDEGSSQEVTESLFVGESRNYGFQGGQNKYMGTGGIDQKPRTLPRNRTFPIRGFQIYDGPIHLTKSTFKKYVPTPDRYSSAIGFLMKNSWQTTPRNNVSLVKFGPQVSLNVFFGKPGPWFEDCELDGDKNSIFHDIDGSVTGYKDTYVGRMDNYLIRHPNCVNVTKWNAVICSGTYAQVYVQTWNTPNLSMIITRDEYPSHPMVLRGINQRAISPQYQPVVMLEKGYTIHWNGPAPRTTFLYLVNFNKDDWIRVGLCYPANTSFQVTVGFLQRQNGSLSRIEDYEPARSMEELQKKPSERKFYFDSGTGLLFLYLRAHSHRDGHSYCSSQGCERVKIQAATDSKDISNCMAKAYPQYYKKPSAVKRMPAMLTGLCQGCGTHQMVFTSDPHKSYLPVRFQSPGKAEIQRGDPSIISVNGTDFTFRSAGALLLIVDACSVPFRVKEKRMFLSADVSHMEEYFKASIPPRSIVLLSTRGEIKQLNISDSLAVLGLAKPAHLYSKGSVVFLGFSGNFAPSWTKLFTSPDEQGLGVLEQFLPLQMEEYGCSRTGSVHRRDLDLLQQALKVL</sequence>
<organism>
    <name type="scientific">Mus musculus</name>
    <name type="common">Mouse</name>
    <dbReference type="NCBI Taxonomy" id="10090"/>
    <lineage>
        <taxon>Eukaryota</taxon>
        <taxon>Metazoa</taxon>
        <taxon>Chordata</taxon>
        <taxon>Craniata</taxon>
        <taxon>Vertebrata</taxon>
        <taxon>Euteleostomi</taxon>
        <taxon>Mammalia</taxon>
        <taxon>Eutheria</taxon>
        <taxon>Euarchontoglires</taxon>
        <taxon>Glires</taxon>
        <taxon>Rodentia</taxon>
        <taxon>Myomorpha</taxon>
        <taxon>Muroidea</taxon>
        <taxon>Muridae</taxon>
        <taxon>Murinae</taxon>
        <taxon>Mus</taxon>
        <taxon>Mus</taxon>
    </lineage>
</organism>
<accession>Q5FWI3</accession>
<accession>Q3UE15</accession>
<accession>Q3UE98</accession>
<accession>Q6DFZ0</accession>
<accession>Q6ZPR7</accession>
<accession>Q8VE53</accession>
<accession>Q9QY22</accession>
<proteinExistence type="evidence at protein level"/>
<name>CEIP2_MOUSE</name>
<feature type="chain" id="PRO_0000289973" description="Cell surface hyaluronidase">
    <location>
        <begin position="1"/>
        <end position="1383"/>
    </location>
</feature>
<feature type="topological domain" description="Cytoplasmic" evidence="10">
    <location>
        <begin position="1"/>
        <end position="82"/>
    </location>
</feature>
<feature type="transmembrane region" description="Helical; Signal-anchor for type II membrane protein">
    <location>
        <begin position="83"/>
        <end position="103"/>
    </location>
</feature>
<feature type="topological domain" description="Extracellular" evidence="10">
    <location>
        <begin position="104"/>
        <end position="1383"/>
    </location>
</feature>
<feature type="domain" description="G8" evidence="3">
    <location>
        <begin position="121"/>
        <end position="245"/>
    </location>
</feature>
<feature type="domain" description="GG-type lectin 1" evidence="4">
    <location>
        <begin position="255"/>
        <end position="412"/>
    </location>
</feature>
<feature type="repeat" description="PbH1 1">
    <location>
        <begin position="669"/>
        <end position="691"/>
    </location>
</feature>
<feature type="repeat" description="PbH1 2">
    <location>
        <begin position="711"/>
        <end position="733"/>
    </location>
</feature>
<feature type="repeat" description="PbH1 3">
    <location>
        <begin position="791"/>
        <end position="812"/>
    </location>
</feature>
<feature type="domain" description="GG-type lectin 2" evidence="4">
    <location>
        <begin position="1208"/>
        <end position="1366"/>
    </location>
</feature>
<feature type="region of interest" description="Disordered" evidence="5">
    <location>
        <begin position="1"/>
        <end position="76"/>
    </location>
</feature>
<feature type="site" description="Essential for hyaluronidase activity" evidence="13">
    <location>
        <position position="248"/>
    </location>
</feature>
<feature type="site" description="Essential for hyaluronidase activity" evidence="13">
    <location>
        <position position="303"/>
    </location>
</feature>
<feature type="modified residue" description="Phosphoserine" evidence="2">
    <location>
        <position position="10"/>
    </location>
</feature>
<feature type="modified residue" description="Phosphoserine" evidence="19 20">
    <location>
        <position position="53"/>
    </location>
</feature>
<feature type="modified residue" description="Phosphoserine" evidence="2">
    <location>
        <position position="63"/>
    </location>
</feature>
<feature type="glycosylation site" description="N-linked (GlcNAc...) asparagine" evidence="7 8">
    <location>
        <position position="292"/>
    </location>
</feature>
<feature type="glycosylation site" description="N-linked (GlcNAc...) asparagine" evidence="8">
    <location>
        <position position="914"/>
    </location>
</feature>
<feature type="glycosylation site" description="N-linked (GlcNAc...) asparagine" evidence="7">
    <location>
        <position position="1234"/>
    </location>
</feature>
<feature type="mutagenesis site" description="Slight suppression of hyaluronidase activity. Hyaluronidase activity is abolished; when associated with 303-F." evidence="13">
    <original>H</original>
    <variation>N</variation>
    <location>
        <position position="248"/>
    </location>
</feature>
<feature type="mutagenesis site" description="Does not affect hyaluronidase activity." evidence="10">
    <original>EKD</original>
    <variation>NKQ</variation>
    <location>
        <begin position="260"/>
        <end position="262"/>
    </location>
</feature>
<feature type="mutagenesis site" description="Strongly decreased hyaluronidase activity." evidence="10">
    <original>R</original>
    <variation>A</variation>
    <variation>C</variation>
    <location>
        <position position="265"/>
    </location>
</feature>
<feature type="mutagenesis site" description="Strongly decreased hyaluronidase activity." evidence="10">
    <original>D</original>
    <variation>N</variation>
    <location>
        <position position="273"/>
    </location>
</feature>
<feature type="mutagenesis site" description="Does not affect hyaluronidase activity." evidence="10">
    <original>D</original>
    <variation>N</variation>
    <location>
        <position position="275"/>
    </location>
</feature>
<feature type="mutagenesis site" description="Slightly increases of hyaluronidase activity." evidence="13">
    <original>V</original>
    <variation>I</variation>
    <location>
        <position position="279"/>
    </location>
</feature>
<feature type="mutagenesis site" description="Does not affect hyaluronidase activity." evidence="10">
    <original>ENE</original>
    <variation>QNQ</variation>
    <location>
        <begin position="281"/>
        <end position="283"/>
    </location>
</feature>
<feature type="mutagenesis site" description="Strongly decreased hyaluronidase activity." evidence="10">
    <original>D</original>
    <variation>N</variation>
    <location>
        <position position="286"/>
    </location>
</feature>
<feature type="mutagenesis site" description="Slight suppression of hyaluronidase activity. Hyaluronidase activity is abolished; when associated with 248-N." evidence="13">
    <original>A</original>
    <variation>F</variation>
    <location>
        <position position="303"/>
    </location>
</feature>
<feature type="mutagenesis site" description="Does not affect hyaluronidase activity." evidence="13">
    <original>K</original>
    <variation>E</variation>
    <location>
        <position position="337"/>
    </location>
</feature>
<feature type="mutagenesis site" description="Does not affect hyaluronidase activity." evidence="13">
    <original>S</original>
    <variation>T</variation>
    <location>
        <position position="359"/>
    </location>
</feature>
<feature type="sequence conflict" description="In Ref. 2; BAE29013." evidence="17" ref="2">
    <original>D</original>
    <variation>G</variation>
    <location>
        <position position="165"/>
    </location>
</feature>
<feature type="sequence conflict" description="In Ref. 4; AAF21349." evidence="17" ref="4">
    <original>A</original>
    <variation>S</variation>
    <location>
        <position position="1134"/>
    </location>
</feature>
<feature type="sequence conflict" description="In Ref. 4; AAF21349." evidence="17" ref="4">
    <original>K</original>
    <variation>R</variation>
    <location>
        <position position="1161"/>
    </location>
</feature>
<feature type="sequence conflict" description="In Ref. 4; AAF21349." evidence="17" ref="4">
    <original>A</original>
    <variation>G</variation>
    <location>
        <position position="1180"/>
    </location>
</feature>
<feature type="sequence conflict" description="In Ref. 1; AAH19745." evidence="17" ref="1">
    <original>A</original>
    <variation>V</variation>
    <location>
        <position position="1245"/>
    </location>
</feature>
<feature type="sequence conflict" description="In Ref. 1; AAH19745." evidence="17" ref="1">
    <original>I</original>
    <variation>V</variation>
    <location>
        <position position="1249"/>
    </location>
</feature>
<feature type="sequence conflict" description="In Ref. 1; AAH19745." evidence="17" ref="1">
    <original>V</original>
    <variation>L</variation>
    <location>
        <position position="1306"/>
    </location>
</feature>
<feature type="sequence conflict" description="In Ref. 1; AAH19745." evidence="17" ref="1">
    <original>D</original>
    <variation>N</variation>
    <location>
        <position position="1342"/>
    </location>
</feature>
<feature type="sequence conflict" description="In Ref. 1; AAH76570." evidence="17" ref="1">
    <original>V</original>
    <variation>L</variation>
    <location>
        <position position="1382"/>
    </location>
</feature>
<reference key="1">
    <citation type="journal article" date="2004" name="Genome Res.">
        <title>The status, quality, and expansion of the NIH full-length cDNA project: the Mammalian Gene Collection (MGC).</title>
        <authorList>
            <consortium name="The MGC Project Team"/>
        </authorList>
    </citation>
    <scope>NUCLEOTIDE SEQUENCE [LARGE SCALE MRNA]</scope>
    <source>
        <strain>C57BL/6J</strain>
        <strain>Czech II</strain>
        <tissue>Brain</tissue>
        <tissue>Mammary tumor</tissue>
    </source>
</reference>
<reference key="2">
    <citation type="journal article" date="2005" name="Science">
        <title>The transcriptional landscape of the mammalian genome.</title>
        <authorList>
            <person name="Carninci P."/>
            <person name="Kasukawa T."/>
            <person name="Katayama S."/>
            <person name="Gough J."/>
            <person name="Frith M.C."/>
            <person name="Maeda N."/>
            <person name="Oyama R."/>
            <person name="Ravasi T."/>
            <person name="Lenhard B."/>
            <person name="Wells C."/>
            <person name="Kodzius R."/>
            <person name="Shimokawa K."/>
            <person name="Bajic V.B."/>
            <person name="Brenner S.E."/>
            <person name="Batalov S."/>
            <person name="Forrest A.R."/>
            <person name="Zavolan M."/>
            <person name="Davis M.J."/>
            <person name="Wilming L.G."/>
            <person name="Aidinis V."/>
            <person name="Allen J.E."/>
            <person name="Ambesi-Impiombato A."/>
            <person name="Apweiler R."/>
            <person name="Aturaliya R.N."/>
            <person name="Bailey T.L."/>
            <person name="Bansal M."/>
            <person name="Baxter L."/>
            <person name="Beisel K.W."/>
            <person name="Bersano T."/>
            <person name="Bono H."/>
            <person name="Chalk A.M."/>
            <person name="Chiu K.P."/>
            <person name="Choudhary V."/>
            <person name="Christoffels A."/>
            <person name="Clutterbuck D.R."/>
            <person name="Crowe M.L."/>
            <person name="Dalla E."/>
            <person name="Dalrymple B.P."/>
            <person name="de Bono B."/>
            <person name="Della Gatta G."/>
            <person name="di Bernardo D."/>
            <person name="Down T."/>
            <person name="Engstrom P."/>
            <person name="Fagiolini M."/>
            <person name="Faulkner G."/>
            <person name="Fletcher C.F."/>
            <person name="Fukushima T."/>
            <person name="Furuno M."/>
            <person name="Futaki S."/>
            <person name="Gariboldi M."/>
            <person name="Georgii-Hemming P."/>
            <person name="Gingeras T.R."/>
            <person name="Gojobori T."/>
            <person name="Green R.E."/>
            <person name="Gustincich S."/>
            <person name="Harbers M."/>
            <person name="Hayashi Y."/>
            <person name="Hensch T.K."/>
            <person name="Hirokawa N."/>
            <person name="Hill D."/>
            <person name="Huminiecki L."/>
            <person name="Iacono M."/>
            <person name="Ikeo K."/>
            <person name="Iwama A."/>
            <person name="Ishikawa T."/>
            <person name="Jakt M."/>
            <person name="Kanapin A."/>
            <person name="Katoh M."/>
            <person name="Kawasawa Y."/>
            <person name="Kelso J."/>
            <person name="Kitamura H."/>
            <person name="Kitano H."/>
            <person name="Kollias G."/>
            <person name="Krishnan S.P."/>
            <person name="Kruger A."/>
            <person name="Kummerfeld S.K."/>
            <person name="Kurochkin I.V."/>
            <person name="Lareau L.F."/>
            <person name="Lazarevic D."/>
            <person name="Lipovich L."/>
            <person name="Liu J."/>
            <person name="Liuni S."/>
            <person name="McWilliam S."/>
            <person name="Madan Babu M."/>
            <person name="Madera M."/>
            <person name="Marchionni L."/>
            <person name="Matsuda H."/>
            <person name="Matsuzawa S."/>
            <person name="Miki H."/>
            <person name="Mignone F."/>
            <person name="Miyake S."/>
            <person name="Morris K."/>
            <person name="Mottagui-Tabar S."/>
            <person name="Mulder N."/>
            <person name="Nakano N."/>
            <person name="Nakauchi H."/>
            <person name="Ng P."/>
            <person name="Nilsson R."/>
            <person name="Nishiguchi S."/>
            <person name="Nishikawa S."/>
            <person name="Nori F."/>
            <person name="Ohara O."/>
            <person name="Okazaki Y."/>
            <person name="Orlando V."/>
            <person name="Pang K.C."/>
            <person name="Pavan W.J."/>
            <person name="Pavesi G."/>
            <person name="Pesole G."/>
            <person name="Petrovsky N."/>
            <person name="Piazza S."/>
            <person name="Reed J."/>
            <person name="Reid J.F."/>
            <person name="Ring B.Z."/>
            <person name="Ringwald M."/>
            <person name="Rost B."/>
            <person name="Ruan Y."/>
            <person name="Salzberg S.L."/>
            <person name="Sandelin A."/>
            <person name="Schneider C."/>
            <person name="Schoenbach C."/>
            <person name="Sekiguchi K."/>
            <person name="Semple C.A."/>
            <person name="Seno S."/>
            <person name="Sessa L."/>
            <person name="Sheng Y."/>
            <person name="Shibata Y."/>
            <person name="Shimada H."/>
            <person name="Shimada K."/>
            <person name="Silva D."/>
            <person name="Sinclair B."/>
            <person name="Sperling S."/>
            <person name="Stupka E."/>
            <person name="Sugiura K."/>
            <person name="Sultana R."/>
            <person name="Takenaka Y."/>
            <person name="Taki K."/>
            <person name="Tammoja K."/>
            <person name="Tan S.L."/>
            <person name="Tang S."/>
            <person name="Taylor M.S."/>
            <person name="Tegner J."/>
            <person name="Teichmann S.A."/>
            <person name="Ueda H.R."/>
            <person name="van Nimwegen E."/>
            <person name="Verardo R."/>
            <person name="Wei C.L."/>
            <person name="Yagi K."/>
            <person name="Yamanishi H."/>
            <person name="Zabarovsky E."/>
            <person name="Zhu S."/>
            <person name="Zimmer A."/>
            <person name="Hide W."/>
            <person name="Bult C."/>
            <person name="Grimmond S.M."/>
            <person name="Teasdale R.D."/>
            <person name="Liu E.T."/>
            <person name="Brusic V."/>
            <person name="Quackenbush J."/>
            <person name="Wahlestedt C."/>
            <person name="Mattick J.S."/>
            <person name="Hume D.A."/>
            <person name="Kai C."/>
            <person name="Sasaki D."/>
            <person name="Tomaru Y."/>
            <person name="Fukuda S."/>
            <person name="Kanamori-Katayama M."/>
            <person name="Suzuki M."/>
            <person name="Aoki J."/>
            <person name="Arakawa T."/>
            <person name="Iida J."/>
            <person name="Imamura K."/>
            <person name="Itoh M."/>
            <person name="Kato T."/>
            <person name="Kawaji H."/>
            <person name="Kawagashira N."/>
            <person name="Kawashima T."/>
            <person name="Kojima M."/>
            <person name="Kondo S."/>
            <person name="Konno H."/>
            <person name="Nakano K."/>
            <person name="Ninomiya N."/>
            <person name="Nishio T."/>
            <person name="Okada M."/>
            <person name="Plessy C."/>
            <person name="Shibata K."/>
            <person name="Shiraki T."/>
            <person name="Suzuki S."/>
            <person name="Tagami M."/>
            <person name="Waki K."/>
            <person name="Watahiki A."/>
            <person name="Okamura-Oho Y."/>
            <person name="Suzuki H."/>
            <person name="Kawai J."/>
            <person name="Hayashizaki Y."/>
        </authorList>
    </citation>
    <scope>NUCLEOTIDE SEQUENCE [LARGE SCALE MRNA] OF 1-235</scope>
    <source>
        <strain>C57BL/6J</strain>
        <tissue>Bone marrow</tissue>
    </source>
</reference>
<reference key="3">
    <citation type="journal article" date="2003" name="DNA Res.">
        <title>Prediction of the coding sequences of mouse homologues of KIAA gene: III. The complete nucleotide sequences of 500 mouse KIAA-homologous cDNAs identified by screening of terminal sequences of cDNA clones randomly sampled from size-fractionated libraries.</title>
        <authorList>
            <person name="Okazaki N."/>
            <person name="Kikuno R."/>
            <person name="Ohara R."/>
            <person name="Inamoto S."/>
            <person name="Koseki H."/>
            <person name="Hiraoka S."/>
            <person name="Saga Y."/>
            <person name="Nagase T."/>
            <person name="Ohara O."/>
            <person name="Koga H."/>
        </authorList>
    </citation>
    <scope>NUCLEOTIDE SEQUENCE [LARGE SCALE MRNA] OF 415-1383</scope>
    <source>
        <tissue>Embryonic tail</tissue>
    </source>
</reference>
<reference key="4">
    <citation type="journal article" date="2000" name="Gene">
        <title>Refining the DFNB7-DFNB11 deafness locus using intragenic polymorphisms in a novel gene, TMEM2.</title>
        <authorList>
            <person name="Scott D.A."/>
            <person name="Drury S."/>
            <person name="Sundstrom R.A."/>
            <person name="Bishop J."/>
            <person name="Swiderski R.E."/>
            <person name="Carmi R."/>
            <person name="Ramesh A."/>
            <person name="Elbedour K."/>
            <person name="Srikumari Srisailapathy C.R."/>
            <person name="Keats B.J."/>
            <person name="Sheffield V.C."/>
            <person name="Smith R.J.H."/>
        </authorList>
    </citation>
    <scope>NUCLEOTIDE SEQUENCE [MRNA] OF 1033-1383</scope>
    <scope>TISSUE SPECIFICITY</scope>
</reference>
<reference key="5">
    <citation type="journal article" date="2009" name="Immunity">
        <title>The phagosomal proteome in interferon-gamma-activated macrophages.</title>
        <authorList>
            <person name="Trost M."/>
            <person name="English L."/>
            <person name="Lemieux S."/>
            <person name="Courcelles M."/>
            <person name="Desjardins M."/>
            <person name="Thibault P."/>
        </authorList>
    </citation>
    <scope>PHOSPHORYLATION [LARGE SCALE ANALYSIS] AT SER-53</scope>
    <scope>IDENTIFICATION BY MASS SPECTROMETRY [LARGE SCALE ANALYSIS]</scope>
</reference>
<reference key="6">
    <citation type="journal article" date="2009" name="Mol. Cell. Proteomics">
        <title>The mouse C2C12 myoblast cell surface N-linked glycoproteome: identification, glycosite occupancy, and membrane orientation.</title>
        <authorList>
            <person name="Gundry R.L."/>
            <person name="Raginski K."/>
            <person name="Tarasova Y."/>
            <person name="Tchernyshyov I."/>
            <person name="Bausch-Fluck D."/>
            <person name="Elliott S.T."/>
            <person name="Boheler K.R."/>
            <person name="Van Eyk J.E."/>
            <person name="Wollscheid B."/>
        </authorList>
    </citation>
    <scope>GLYCOSYLATION [LARGE SCALE ANALYSIS] AT ASN-292 AND ASN-914</scope>
    <source>
        <tissue>Myoblast</tissue>
    </source>
</reference>
<reference key="7">
    <citation type="journal article" date="2009" name="Nat. Biotechnol.">
        <title>Mass-spectrometric identification and relative quantification of N-linked cell surface glycoproteins.</title>
        <authorList>
            <person name="Wollscheid B."/>
            <person name="Bausch-Fluck D."/>
            <person name="Henderson C."/>
            <person name="O'Brien R."/>
            <person name="Bibel M."/>
            <person name="Schiess R."/>
            <person name="Aebersold R."/>
            <person name="Watts J.D."/>
        </authorList>
    </citation>
    <scope>GLYCOSYLATION [LARGE SCALE ANALYSIS] AT ASN-292 AND ASN-1234</scope>
</reference>
<reference key="8">
    <citation type="journal article" date="2010" name="Cell">
        <title>A tissue-specific atlas of mouse protein phosphorylation and expression.</title>
        <authorList>
            <person name="Huttlin E.L."/>
            <person name="Jedrychowski M.P."/>
            <person name="Elias J.E."/>
            <person name="Goswami T."/>
            <person name="Rad R."/>
            <person name="Beausoleil S.A."/>
            <person name="Villen J."/>
            <person name="Haas W."/>
            <person name="Sowa M.E."/>
            <person name="Gygi S.P."/>
        </authorList>
    </citation>
    <scope>PHOSPHORYLATION [LARGE SCALE ANALYSIS] AT SER-53</scope>
    <scope>IDENTIFICATION BY MASS SPECTROMETRY [LARGE SCALE ANALYSIS]</scope>
    <source>
        <tissue>Brain</tissue>
        <tissue>Brown adipose tissue</tissue>
        <tissue>Kidney</tissue>
        <tissue>Liver</tissue>
        <tissue>Lung</tissue>
        <tissue>Spleen</tissue>
    </source>
</reference>
<reference key="9">
    <citation type="journal article" date="2011" name="Development">
        <title>Transmembrane protein 2 (Tmem2) is required to regionally restrict atrioventricular canal boundary and endocardial cushion development.</title>
        <authorList>
            <person name="Smith K.A."/>
            <person name="Lagendijk A.K."/>
            <person name="Courtney A.D."/>
            <person name="Chen H."/>
            <person name="Paterson S."/>
            <person name="Hogan B.M."/>
            <person name="Wicking C."/>
            <person name="Bakkers J."/>
        </authorList>
    </citation>
    <scope>DEVELOPMENTAL STAGE</scope>
</reference>
<reference key="10">
    <citation type="journal article" date="2017" name="J. Biol. Chem.">
        <title>A Mammalian homolog of the zebrafish transmembrane protein 2 (TMEM2) is the long-sought-after cell surface hyaluronidase.</title>
        <authorList>
            <person name="Yamamoto H."/>
            <person name="Tobisawa Y."/>
            <person name="Inubushi T."/>
            <person name="Irie F."/>
            <person name="Oyama C."/>
            <person name="Yamaguchi Y."/>
        </authorList>
    </citation>
    <scope>FUNCTION</scope>
    <scope>CATALYTIC ACTIVITY</scope>
    <scope>COFACTOR</scope>
    <scope>BIOPHYSICOCHEMICAL PROPERTIES</scope>
    <scope>SUBCELLULAR LOCATION</scope>
    <scope>MUTAGENESIS OF 260-GLU--ASP-262; ARG-265; ASP-273; ASP-275; 281-GLU--GLU-283 AND ASP-286</scope>
    <scope>TOPOLOGY</scope>
    <scope>TISSUE SPECIFICITY</scope>
</reference>
<reference key="11">
    <citation type="journal article" date="2021" name="J. Biol. Chem.">
        <title>The cell surface hyaluronidase TMEM2 regulates cell adhesion and migration via degradation of hyaluronan at focal adhesion sites.</title>
        <authorList>
            <person name="Irie F."/>
            <person name="Tobisawa Y."/>
            <person name="Murao A."/>
            <person name="Yamamoto H."/>
            <person name="Ohyama C."/>
            <person name="Yamaguchi Y."/>
        </authorList>
    </citation>
    <scope>FUNCTION</scope>
    <scope>CATALYTIC ACTIVITY</scope>
</reference>
<reference key="12">
    <citation type="journal article" date="2021" name="J. Biol. Chem.">
        <title>The cell surface hyaluronidase TMEM2 is essential for systemic hyaluronan catabolism and turnover.</title>
        <authorList>
            <person name="Tobisawa Y."/>
            <person name="Fujita N."/>
            <person name="Yamamoto H."/>
            <person name="Ohyama C."/>
            <person name="Irie F."/>
            <person name="Yamaguchi Y."/>
        </authorList>
    </citation>
    <scope>FUNCTION</scope>
    <scope>TISSUE SPECIFICITY</scope>
</reference>
<reference key="13">
    <citation type="journal article" date="2023" name="J. Biol. Chem.">
        <title>Human TMEM2 is not a catalytic hyaluronidase, but a regulator of hyaluronan metabolism via HYBID (KIAA1199/CEMIP) and HAS2 expression.</title>
        <authorList>
            <person name="Sato S."/>
            <person name="Miyazaki M."/>
            <person name="Fukuda S."/>
            <person name="Mizutani Y."/>
            <person name="Mizukami Y."/>
            <person name="Higashiyama S."/>
            <person name="Inoue S."/>
        </authorList>
    </citation>
    <scope>FUNCTION</scope>
    <scope>CATALYTIC ACTIVITY</scope>
    <scope>MUTAGENESIS OF HIS-248; VAL-279; ALA-303; LYS-337 AND SER-359</scope>
</reference>
<reference key="14">
    <citation type="journal article" date="2023" name="J. Biol. Chem.">
        <title>TMEM2 is a bona fide hyaluronidase possessing intrinsic catalytic activity.</title>
        <authorList>
            <person name="Narita T."/>
            <person name="Tobisawa Y."/>
            <person name="Bobkov A."/>
            <person name="Jackson M."/>
            <person name="Ohyama C."/>
            <person name="Irie F."/>
            <person name="Yamaguchi Y."/>
        </authorList>
    </citation>
    <scope>FUNCTION</scope>
    <scope>CATALYTIC ACTIVITY</scope>
</reference>
<evidence type="ECO:0000250" key="1">
    <source>
        <dbReference type="UniProtKB" id="A3KPQ7"/>
    </source>
</evidence>
<evidence type="ECO:0000250" key="2">
    <source>
        <dbReference type="UniProtKB" id="Q9UHN6"/>
    </source>
</evidence>
<evidence type="ECO:0000255" key="3">
    <source>
        <dbReference type="PROSITE-ProRule" id="PRU00817"/>
    </source>
</evidence>
<evidence type="ECO:0000255" key="4">
    <source>
        <dbReference type="PROSITE-ProRule" id="PRU01375"/>
    </source>
</evidence>
<evidence type="ECO:0000256" key="5">
    <source>
        <dbReference type="SAM" id="MobiDB-lite"/>
    </source>
</evidence>
<evidence type="ECO:0000269" key="6">
    <source>
    </source>
</evidence>
<evidence type="ECO:0000269" key="7">
    <source>
    </source>
</evidence>
<evidence type="ECO:0000269" key="8">
    <source>
    </source>
</evidence>
<evidence type="ECO:0000269" key="9">
    <source>
    </source>
</evidence>
<evidence type="ECO:0000269" key="10">
    <source>
    </source>
</evidence>
<evidence type="ECO:0000269" key="11">
    <source>
    </source>
</evidence>
<evidence type="ECO:0000269" key="12">
    <source>
    </source>
</evidence>
<evidence type="ECO:0000269" key="13">
    <source>
    </source>
</evidence>
<evidence type="ECO:0000269" key="14">
    <source>
    </source>
</evidence>
<evidence type="ECO:0000303" key="15">
    <source>
    </source>
</evidence>
<evidence type="ECO:0000303" key="16">
    <source>
    </source>
</evidence>
<evidence type="ECO:0000305" key="17"/>
<evidence type="ECO:0000312" key="18">
    <source>
        <dbReference type="MGI" id="MGI:1890373"/>
    </source>
</evidence>
<evidence type="ECO:0007744" key="19">
    <source>
    </source>
</evidence>
<evidence type="ECO:0007744" key="20">
    <source>
    </source>
</evidence>